<sequence>MSQANAATKASSDVFFNASLEDIDPEIFGAIRNELGRQRHEIELIASENIVSRAVLEAQGSILTNKYAEGYPGKRYYGGCQYVDVVEELAIERAKKLFGAEFVNVQPNSGSQMNQAVFLALLQPGDTFMGLDLNSGGHLTHGSPVNMSGKWFNVVSYGVRKDDHLLDMDEVARPARENKPKLILAGGTAYSRIWDWKRFREIADEVGAYLMVDMAHIAGLVAGGQHPSPVPHAHVCTTTTHKSLRGPRGGMILTNDADIAKKINSAVFPGLQGGPLMHVIAGKAVAFAEALKPEFKLYAKNVVDNARALAEELKSHGLDIVSGGTDNHLMLVDLRPKNATGKRAEAALGRANITCNKNGIPFDPEKPFVTSGVRLGTPAGTTRGFGVAEFKEIGSLIAEVLDGLKVANSDEGNAAVEQAVKEKVIALTGRFPMYGYQG</sequence>
<feature type="chain" id="PRO_1000006227" description="Serine hydroxymethyltransferase">
    <location>
        <begin position="1"/>
        <end position="438"/>
    </location>
</feature>
<feature type="binding site" evidence="1">
    <location>
        <position position="133"/>
    </location>
    <ligand>
        <name>(6S)-5,6,7,8-tetrahydrofolate</name>
        <dbReference type="ChEBI" id="CHEBI:57453"/>
    </ligand>
</feature>
<feature type="binding site" evidence="1">
    <location>
        <begin position="137"/>
        <end position="139"/>
    </location>
    <ligand>
        <name>(6S)-5,6,7,8-tetrahydrofolate</name>
        <dbReference type="ChEBI" id="CHEBI:57453"/>
    </ligand>
</feature>
<feature type="site" description="Plays an important role in substrate specificity" evidence="1">
    <location>
        <position position="241"/>
    </location>
</feature>
<feature type="modified residue" description="N6-(pyridoxal phosphate)lysine" evidence="1">
    <location>
        <position position="242"/>
    </location>
</feature>
<keyword id="KW-0028">Amino-acid biosynthesis</keyword>
<keyword id="KW-0963">Cytoplasm</keyword>
<keyword id="KW-0554">One-carbon metabolism</keyword>
<keyword id="KW-0663">Pyridoxal phosphate</keyword>
<keyword id="KW-0808">Transferase</keyword>
<dbReference type="EC" id="2.1.2.1" evidence="1"/>
<dbReference type="EMBL" id="CP000708">
    <property type="protein sequence ID" value="ABQ61807.1"/>
    <property type="molecule type" value="Genomic_DNA"/>
</dbReference>
<dbReference type="RefSeq" id="WP_006012161.1">
    <property type="nucleotide sequence ID" value="NC_009505.1"/>
</dbReference>
<dbReference type="SMR" id="A5VPU7"/>
<dbReference type="GeneID" id="45124202"/>
<dbReference type="KEGG" id="bov:BOV_0758"/>
<dbReference type="HOGENOM" id="CLU_022477_2_1_5"/>
<dbReference type="PhylomeDB" id="A5VPU7"/>
<dbReference type="UniPathway" id="UPA00193"/>
<dbReference type="UniPathway" id="UPA00288">
    <property type="reaction ID" value="UER01023"/>
</dbReference>
<dbReference type="PRO" id="PR:A5VPU7"/>
<dbReference type="Proteomes" id="UP000006383">
    <property type="component" value="Chromosome I"/>
</dbReference>
<dbReference type="GO" id="GO:0005829">
    <property type="term" value="C:cytosol"/>
    <property type="evidence" value="ECO:0007669"/>
    <property type="project" value="TreeGrafter"/>
</dbReference>
<dbReference type="GO" id="GO:0004372">
    <property type="term" value="F:glycine hydroxymethyltransferase activity"/>
    <property type="evidence" value="ECO:0007669"/>
    <property type="project" value="UniProtKB-UniRule"/>
</dbReference>
<dbReference type="GO" id="GO:0030170">
    <property type="term" value="F:pyridoxal phosphate binding"/>
    <property type="evidence" value="ECO:0007669"/>
    <property type="project" value="UniProtKB-UniRule"/>
</dbReference>
<dbReference type="GO" id="GO:0019264">
    <property type="term" value="P:glycine biosynthetic process from serine"/>
    <property type="evidence" value="ECO:0007669"/>
    <property type="project" value="UniProtKB-UniRule"/>
</dbReference>
<dbReference type="GO" id="GO:0035999">
    <property type="term" value="P:tetrahydrofolate interconversion"/>
    <property type="evidence" value="ECO:0007669"/>
    <property type="project" value="UniProtKB-UniRule"/>
</dbReference>
<dbReference type="CDD" id="cd00378">
    <property type="entry name" value="SHMT"/>
    <property type="match status" value="1"/>
</dbReference>
<dbReference type="FunFam" id="3.40.640.10:FF:000001">
    <property type="entry name" value="Serine hydroxymethyltransferase"/>
    <property type="match status" value="1"/>
</dbReference>
<dbReference type="FunFam" id="3.90.1150.10:FF:000003">
    <property type="entry name" value="Serine hydroxymethyltransferase"/>
    <property type="match status" value="1"/>
</dbReference>
<dbReference type="Gene3D" id="3.90.1150.10">
    <property type="entry name" value="Aspartate Aminotransferase, domain 1"/>
    <property type="match status" value="1"/>
</dbReference>
<dbReference type="Gene3D" id="3.40.640.10">
    <property type="entry name" value="Type I PLP-dependent aspartate aminotransferase-like (Major domain)"/>
    <property type="match status" value="1"/>
</dbReference>
<dbReference type="HAMAP" id="MF_00051">
    <property type="entry name" value="SHMT"/>
    <property type="match status" value="1"/>
</dbReference>
<dbReference type="InterPro" id="IPR015424">
    <property type="entry name" value="PyrdxlP-dep_Trfase"/>
</dbReference>
<dbReference type="InterPro" id="IPR015421">
    <property type="entry name" value="PyrdxlP-dep_Trfase_major"/>
</dbReference>
<dbReference type="InterPro" id="IPR015422">
    <property type="entry name" value="PyrdxlP-dep_Trfase_small"/>
</dbReference>
<dbReference type="InterPro" id="IPR001085">
    <property type="entry name" value="Ser_HO-MeTrfase"/>
</dbReference>
<dbReference type="InterPro" id="IPR049943">
    <property type="entry name" value="Ser_HO-MeTrfase-like"/>
</dbReference>
<dbReference type="InterPro" id="IPR019798">
    <property type="entry name" value="Ser_HO-MeTrfase_PLP_BS"/>
</dbReference>
<dbReference type="InterPro" id="IPR039429">
    <property type="entry name" value="SHMT-like_dom"/>
</dbReference>
<dbReference type="NCBIfam" id="NF000586">
    <property type="entry name" value="PRK00011.1"/>
    <property type="match status" value="1"/>
</dbReference>
<dbReference type="PANTHER" id="PTHR11680">
    <property type="entry name" value="SERINE HYDROXYMETHYLTRANSFERASE"/>
    <property type="match status" value="1"/>
</dbReference>
<dbReference type="PANTHER" id="PTHR11680:SF35">
    <property type="entry name" value="SERINE HYDROXYMETHYLTRANSFERASE 1"/>
    <property type="match status" value="1"/>
</dbReference>
<dbReference type="Pfam" id="PF00464">
    <property type="entry name" value="SHMT"/>
    <property type="match status" value="1"/>
</dbReference>
<dbReference type="PIRSF" id="PIRSF000412">
    <property type="entry name" value="SHMT"/>
    <property type="match status" value="1"/>
</dbReference>
<dbReference type="SUPFAM" id="SSF53383">
    <property type="entry name" value="PLP-dependent transferases"/>
    <property type="match status" value="1"/>
</dbReference>
<dbReference type="PROSITE" id="PS00096">
    <property type="entry name" value="SHMT"/>
    <property type="match status" value="1"/>
</dbReference>
<name>GLYA_BRUO2</name>
<organism>
    <name type="scientific">Brucella ovis (strain ATCC 25840 / 63/290 / NCTC 10512)</name>
    <dbReference type="NCBI Taxonomy" id="444178"/>
    <lineage>
        <taxon>Bacteria</taxon>
        <taxon>Pseudomonadati</taxon>
        <taxon>Pseudomonadota</taxon>
        <taxon>Alphaproteobacteria</taxon>
        <taxon>Hyphomicrobiales</taxon>
        <taxon>Brucellaceae</taxon>
        <taxon>Brucella/Ochrobactrum group</taxon>
        <taxon>Brucella</taxon>
    </lineage>
</organism>
<protein>
    <recommendedName>
        <fullName evidence="1">Serine hydroxymethyltransferase</fullName>
        <shortName evidence="1">SHMT</shortName>
        <shortName evidence="1">Serine methylase</shortName>
        <ecNumber evidence="1">2.1.2.1</ecNumber>
    </recommendedName>
</protein>
<proteinExistence type="inferred from homology"/>
<gene>
    <name evidence="1" type="primary">glyA</name>
    <name type="ordered locus">BOV_0758</name>
</gene>
<reference key="1">
    <citation type="journal article" date="2009" name="PLoS ONE">
        <title>Genome degradation in Brucella ovis corresponds with narrowing of its host range and tissue tropism.</title>
        <authorList>
            <person name="Tsolis R.M."/>
            <person name="Seshadri R."/>
            <person name="Santos R.L."/>
            <person name="Sangari F.J."/>
            <person name="Lobo J.M."/>
            <person name="de Jong M.F."/>
            <person name="Ren Q."/>
            <person name="Myers G."/>
            <person name="Brinkac L.M."/>
            <person name="Nelson W.C."/>
            <person name="Deboy R.T."/>
            <person name="Angiuoli S."/>
            <person name="Khouri H."/>
            <person name="Dimitrov G."/>
            <person name="Robinson J.R."/>
            <person name="Mulligan S."/>
            <person name="Walker R.L."/>
            <person name="Elzer P.E."/>
            <person name="Hassan K.A."/>
            <person name="Paulsen I.T."/>
        </authorList>
    </citation>
    <scope>NUCLEOTIDE SEQUENCE [LARGE SCALE GENOMIC DNA]</scope>
    <source>
        <strain>ATCC 25840 / 63/290 / NCTC 10512</strain>
    </source>
</reference>
<evidence type="ECO:0000255" key="1">
    <source>
        <dbReference type="HAMAP-Rule" id="MF_00051"/>
    </source>
</evidence>
<comment type="function">
    <text evidence="1">Catalyzes the reversible interconversion of serine and glycine with tetrahydrofolate (THF) serving as the one-carbon carrier. This reaction serves as the major source of one-carbon groups required for the biosynthesis of purines, thymidylate, methionine, and other important biomolecules. Also exhibits THF-independent aldolase activity toward beta-hydroxyamino acids, producing glycine and aldehydes, via a retro-aldol mechanism.</text>
</comment>
<comment type="catalytic activity">
    <reaction evidence="1">
        <text>(6R)-5,10-methylene-5,6,7,8-tetrahydrofolate + glycine + H2O = (6S)-5,6,7,8-tetrahydrofolate + L-serine</text>
        <dbReference type="Rhea" id="RHEA:15481"/>
        <dbReference type="ChEBI" id="CHEBI:15377"/>
        <dbReference type="ChEBI" id="CHEBI:15636"/>
        <dbReference type="ChEBI" id="CHEBI:33384"/>
        <dbReference type="ChEBI" id="CHEBI:57305"/>
        <dbReference type="ChEBI" id="CHEBI:57453"/>
        <dbReference type="EC" id="2.1.2.1"/>
    </reaction>
</comment>
<comment type="cofactor">
    <cofactor evidence="1">
        <name>pyridoxal 5'-phosphate</name>
        <dbReference type="ChEBI" id="CHEBI:597326"/>
    </cofactor>
</comment>
<comment type="pathway">
    <text evidence="1">One-carbon metabolism; tetrahydrofolate interconversion.</text>
</comment>
<comment type="pathway">
    <text evidence="1">Amino-acid biosynthesis; glycine biosynthesis; glycine from L-serine: step 1/1.</text>
</comment>
<comment type="subunit">
    <text evidence="1">Homodimer.</text>
</comment>
<comment type="subcellular location">
    <subcellularLocation>
        <location evidence="1">Cytoplasm</location>
    </subcellularLocation>
</comment>
<comment type="similarity">
    <text evidence="1">Belongs to the SHMT family.</text>
</comment>
<accession>A5VPU7</accession>